<proteinExistence type="inferred from homology"/>
<comment type="function">
    <text evidence="1">Plays essential roles both in the entry of the viral genome into the bacterial host and in budding process. The formation of the G3P-G6P complex termed adsorption complex is essential for correct termination of filamentous phage assembly (By similarity).</text>
</comment>
<comment type="subunit">
    <text evidence="1">Interacts with G3P; this interaction is required for proper integration of G3P and G6P into the virion.</text>
</comment>
<comment type="subcellular location">
    <subcellularLocation>
        <location evidence="3">Virion</location>
    </subcellularLocation>
    <subcellularLocation>
        <location evidence="3">Host membrane</location>
        <topology evidence="3">Multi-pass membrane protein</topology>
    </subcellularLocation>
    <text evidence="1">Prior to assembly, G6P is found associated with the bacterial host inner membrane. There are about five copies of G6P in the mature virion. They are located together with G3P at the head side of the filamentous virion (By similarity).</text>
</comment>
<comment type="similarity">
    <text evidence="3">Belongs to the inovirus G6P protein family.</text>
</comment>
<name>G6P_BPPF1</name>
<dbReference type="EMBL" id="X52107">
    <property type="protein sequence ID" value="CAA36333.1"/>
    <property type="molecule type" value="Genomic_DNA"/>
</dbReference>
<dbReference type="PIR" id="S15145">
    <property type="entry name" value="S15145"/>
</dbReference>
<dbReference type="KEGG" id="vg:1260701"/>
<dbReference type="Proteomes" id="UP000002121">
    <property type="component" value="Genome"/>
</dbReference>
<dbReference type="GO" id="GO:0033644">
    <property type="term" value="C:host cell membrane"/>
    <property type="evidence" value="ECO:0007669"/>
    <property type="project" value="UniProtKB-SubCell"/>
</dbReference>
<dbReference type="GO" id="GO:0016020">
    <property type="term" value="C:membrane"/>
    <property type="evidence" value="ECO:0007669"/>
    <property type="project" value="UniProtKB-KW"/>
</dbReference>
<dbReference type="GO" id="GO:0044423">
    <property type="term" value="C:virion component"/>
    <property type="evidence" value="ECO:0007669"/>
    <property type="project" value="UniProtKB-KW"/>
</dbReference>
<dbReference type="GO" id="GO:0046718">
    <property type="term" value="P:symbiont entry into host cell"/>
    <property type="evidence" value="ECO:0007669"/>
    <property type="project" value="UniProtKB-KW"/>
</dbReference>
<dbReference type="InterPro" id="IPR019670">
    <property type="entry name" value="DUF2523"/>
</dbReference>
<dbReference type="Pfam" id="PF10734">
    <property type="entry name" value="DUF2523"/>
    <property type="match status" value="1"/>
</dbReference>
<keyword id="KW-1043">Host membrane</keyword>
<keyword id="KW-0472">Membrane</keyword>
<keyword id="KW-1185">Reference proteome</keyword>
<keyword id="KW-0812">Transmembrane</keyword>
<keyword id="KW-1133">Transmembrane helix</keyword>
<keyword id="KW-1162">Viral penetration into host cytoplasm</keyword>
<keyword id="KW-1241">Viral penetration into host cytoplasm via pilus retraction</keyword>
<keyword id="KW-0946">Virion</keyword>
<keyword id="KW-1160">Virus entry into host cell</keyword>
<gene>
    <name type="primary">VI</name>
</gene>
<reference key="1">
    <citation type="journal article" date="1991" name="J. Mol. Biol.">
        <title>DNA sequence of the filamentous bacteriophage Pf1.</title>
        <authorList>
            <person name="Hill D.F."/>
            <person name="Short N.J."/>
            <person name="Perham R.N."/>
            <person name="Petersen G.B."/>
        </authorList>
    </citation>
    <scope>NUCLEOTIDE SEQUENCE [GENOMIC DNA]</scope>
</reference>
<evidence type="ECO:0000250" key="1"/>
<evidence type="ECO:0000255" key="2"/>
<evidence type="ECO:0000305" key="3"/>
<sequence length="141" mass="15791">MEWLSGFLDQIIAFFQWIWDFFAQGIYDFVRDGLVVATKASMYAALQTLILLIDVSYTAARELIDSLGVPQMIRSMYAALPGPIAAGLAFFGVPQALNIIMGRGGDALLHALRAVHWEVIRVDQDPSRPQWLLQNLRRDPG</sequence>
<feature type="chain" id="PRO_0000378350" description="Head virion protein G6P">
    <location>
        <begin position="1"/>
        <end position="141"/>
    </location>
</feature>
<feature type="transmembrane region" description="Helical" evidence="2">
    <location>
        <begin position="3"/>
        <end position="23"/>
    </location>
</feature>
<feature type="transmembrane region" description="Helical" evidence="2">
    <location>
        <begin position="33"/>
        <end position="53"/>
    </location>
</feature>
<feature type="transmembrane region" description="Helical" evidence="2">
    <location>
        <begin position="80"/>
        <end position="100"/>
    </location>
</feature>
<accession>Q38066</accession>
<protein>
    <recommendedName>
        <fullName>Head virion protein G6P</fullName>
    </recommendedName>
    <alternativeName>
        <fullName>Coat protein D</fullName>
    </alternativeName>
    <alternativeName>
        <fullName>G6P</fullName>
    </alternativeName>
</protein>
<organism>
    <name type="scientific">Pseudomonas phage Pf1</name>
    <name type="common">Bacteriophage Pf1</name>
    <dbReference type="NCBI Taxonomy" id="2011081"/>
    <lineage>
        <taxon>Viruses</taxon>
        <taxon>Monodnaviria</taxon>
        <taxon>Loebvirae</taxon>
        <taxon>Hofneiviricota</taxon>
        <taxon>Faserviricetes</taxon>
        <taxon>Tubulavirales</taxon>
        <taxon>Inoviridae</taxon>
        <taxon>Primolicivirus</taxon>
    </lineage>
</organism>
<organismHost>
    <name type="scientific">Pseudomonas aeruginosa</name>
    <dbReference type="NCBI Taxonomy" id="287"/>
</organismHost>